<keyword id="KW-0104">Cadmium</keyword>
<keyword id="KW-0903">Direct protein sequencing</keyword>
<keyword id="KW-0479">Metal-binding</keyword>
<keyword id="KW-0480">Metal-thiolate cluster</keyword>
<comment type="function">
    <text>The metallothioneins are involved in the cellular sequestration of toxic metal ions.</text>
</comment>
<comment type="subunit">
    <text>Monomer.</text>
</comment>
<comment type="induction">
    <text>By cadmium.</text>
</comment>
<comment type="similarity">
    <text evidence="3">Belongs to the metallothionein superfamily. Type 2 family.</text>
</comment>
<sequence length="73" mass="7080">MPAPCNCIESNVCICGTGCSGEGCRCGDACKCSGADCKCSGCKVVCKCSGSCACEAGCTGPSTCRCAPGCSCK</sequence>
<organism>
    <name type="scientific">Mytilus edulis</name>
    <name type="common">Blue mussel</name>
    <dbReference type="NCBI Taxonomy" id="6550"/>
    <lineage>
        <taxon>Eukaryota</taxon>
        <taxon>Metazoa</taxon>
        <taxon>Spiralia</taxon>
        <taxon>Lophotrochozoa</taxon>
        <taxon>Mollusca</taxon>
        <taxon>Bivalvia</taxon>
        <taxon>Autobranchia</taxon>
        <taxon>Pteriomorphia</taxon>
        <taxon>Mytilida</taxon>
        <taxon>Mytiloidea</taxon>
        <taxon>Mytilidae</taxon>
        <taxon>Mytilinae</taxon>
        <taxon>Mytilus</taxon>
    </lineage>
</organism>
<reference key="1">
    <citation type="journal article" date="1999" name="Comp. Biochem. Physiol.">
        <title>Cloning and characterization of metallothionein cDNAs in the mussel Mytilus edulis L. digestive gland.</title>
        <authorList>
            <person name="Barsyte D."/>
            <person name="White K.N."/>
            <person name="Lovejoy D.A."/>
        </authorList>
    </citation>
    <scope>NUCLEOTIDE SEQUENCE [MRNA]</scope>
    <source>
        <tissue>Digestive gland</tissue>
    </source>
</reference>
<reference key="2">
    <citation type="journal article" date="1993" name="Eur. J. Biochem.">
        <title>Complete amino acid sequences of five dimeric and four monomeric forms of metallothionein from the edible mussel Mytilus edulis.</title>
        <authorList>
            <person name="Mackay E.A."/>
            <person name="Overnell J."/>
            <person name="Dunbar B."/>
            <person name="Davidson I."/>
            <person name="Hunziker P.E."/>
            <person name="Kaegi J.H.R."/>
            <person name="Fothergill J.E."/>
        </authorList>
    </citation>
    <scope>PROTEIN SEQUENCE OF 2-73</scope>
</reference>
<feature type="initiator methionine" description="Removed" evidence="2">
    <location>
        <position position="1"/>
    </location>
</feature>
<feature type="chain" id="PRO_0000197327" description="Metallothionein 10-III">
    <location>
        <begin position="2"/>
        <end position="73"/>
    </location>
</feature>
<feature type="binding site" evidence="1">
    <location>
        <position position="15"/>
    </location>
    <ligand>
        <name>Cd(2+)</name>
        <dbReference type="ChEBI" id="CHEBI:48775"/>
        <label>1</label>
    </ligand>
</feature>
<feature type="binding site" evidence="1">
    <location>
        <position position="19"/>
    </location>
    <ligand>
        <name>Cd(2+)</name>
        <dbReference type="ChEBI" id="CHEBI:48775"/>
        <label>1</label>
    </ligand>
</feature>
<feature type="binding site" evidence="1">
    <location>
        <position position="19"/>
    </location>
    <ligand>
        <name>Cd(2+)</name>
        <dbReference type="ChEBI" id="CHEBI:48775"/>
        <label>2</label>
    </ligand>
</feature>
<feature type="binding site" evidence="1">
    <location>
        <position position="24"/>
    </location>
    <ligand>
        <name>Cd(2+)</name>
        <dbReference type="ChEBI" id="CHEBI:48775"/>
        <label>2</label>
    </ligand>
</feature>
<feature type="binding site" evidence="1">
    <location>
        <position position="26"/>
    </location>
    <ligand>
        <name>Cd(2+)</name>
        <dbReference type="ChEBI" id="CHEBI:48775"/>
        <label>3</label>
    </ligand>
</feature>
<feature type="binding site" evidence="1">
    <location>
        <position position="30"/>
    </location>
    <ligand>
        <name>Cd(2+)</name>
        <dbReference type="ChEBI" id="CHEBI:48775"/>
        <label>3</label>
    </ligand>
</feature>
<feature type="binding site" evidence="1">
    <location>
        <position position="32"/>
    </location>
    <ligand>
        <name>Cd(2+)</name>
        <dbReference type="ChEBI" id="CHEBI:48775"/>
        <label>1</label>
    </ligand>
</feature>
<feature type="binding site" evidence="1">
    <location>
        <position position="32"/>
    </location>
    <ligand>
        <name>Cd(2+)</name>
        <dbReference type="ChEBI" id="CHEBI:48775"/>
        <label>3</label>
    </ligand>
</feature>
<feature type="binding site" evidence="1">
    <location>
        <position position="37"/>
    </location>
    <ligand>
        <name>Cd(2+)</name>
        <dbReference type="ChEBI" id="CHEBI:48775"/>
        <label>1</label>
    </ligand>
</feature>
<feature type="binding site" evidence="1">
    <location>
        <position position="39"/>
    </location>
    <ligand>
        <name>Cd(2+)</name>
        <dbReference type="ChEBI" id="CHEBI:48775"/>
        <label>2</label>
    </ligand>
</feature>
<feature type="binding site" evidence="1">
    <location>
        <position position="42"/>
    </location>
    <ligand>
        <name>Cd(2+)</name>
        <dbReference type="ChEBI" id="CHEBI:48775"/>
        <label>2</label>
    </ligand>
</feature>
<feature type="binding site" evidence="1">
    <location>
        <position position="42"/>
    </location>
    <ligand>
        <name>Cd(2+)</name>
        <dbReference type="ChEBI" id="CHEBI:48775"/>
        <label>3</label>
    </ligand>
</feature>
<feature type="binding site" evidence="1">
    <location>
        <position position="46"/>
    </location>
    <ligand>
        <name>Cd(2+)</name>
        <dbReference type="ChEBI" id="CHEBI:48775"/>
        <label>4</label>
    </ligand>
</feature>
<feature type="binding site" evidence="1">
    <location>
        <position position="48"/>
    </location>
    <ligand>
        <name>Cd(2+)</name>
        <dbReference type="ChEBI" id="CHEBI:48775"/>
        <label>5</label>
    </ligand>
</feature>
<feature type="binding site" evidence="1">
    <location>
        <position position="52"/>
    </location>
    <ligand>
        <name>Cd(2+)</name>
        <dbReference type="ChEBI" id="CHEBI:48775"/>
        <label>5</label>
    </ligand>
</feature>
<feature type="binding site" evidence="1">
    <location>
        <position position="54"/>
    </location>
    <ligand>
        <name>Cd(2+)</name>
        <dbReference type="ChEBI" id="CHEBI:48775"/>
        <label>5</label>
    </ligand>
</feature>
<feature type="binding site" evidence="1">
    <location>
        <position position="54"/>
    </location>
    <ligand>
        <name>Cd(2+)</name>
        <dbReference type="ChEBI" id="CHEBI:48775"/>
        <label>6</label>
    </ligand>
</feature>
<feature type="binding site" evidence="1">
    <location>
        <position position="58"/>
    </location>
    <ligand>
        <name>Cd(2+)</name>
        <dbReference type="ChEBI" id="CHEBI:48775"/>
        <label>4</label>
    </ligand>
</feature>
<feature type="binding site" evidence="1">
    <location>
        <position position="58"/>
    </location>
    <ligand>
        <name>Cd(2+)</name>
        <dbReference type="ChEBI" id="CHEBI:48775"/>
        <label>5</label>
    </ligand>
</feature>
<feature type="binding site" evidence="1">
    <location>
        <position position="64"/>
    </location>
    <ligand>
        <name>Cd(2+)</name>
        <dbReference type="ChEBI" id="CHEBI:48775"/>
        <label>4</label>
    </ligand>
</feature>
<feature type="binding site" evidence="1">
    <location>
        <position position="66"/>
    </location>
    <ligand>
        <name>Cd(2+)</name>
        <dbReference type="ChEBI" id="CHEBI:48775"/>
        <label>6</label>
    </ligand>
</feature>
<feature type="binding site" evidence="1">
    <location>
        <position position="70"/>
    </location>
    <ligand>
        <name>Cd(2+)</name>
        <dbReference type="ChEBI" id="CHEBI:48775"/>
        <label>6</label>
    </ligand>
</feature>
<feature type="binding site" evidence="1">
    <location>
        <position position="72"/>
    </location>
    <ligand>
        <name>Cd(2+)</name>
        <dbReference type="ChEBI" id="CHEBI:48775"/>
        <label>4</label>
    </ligand>
</feature>
<feature type="binding site" evidence="1">
    <location>
        <position position="72"/>
    </location>
    <ligand>
        <name>Cd(2+)</name>
        <dbReference type="ChEBI" id="CHEBI:48775"/>
        <label>6</label>
    </ligand>
</feature>
<evidence type="ECO:0000250" key="1">
    <source>
        <dbReference type="UniProtKB" id="P33187"/>
    </source>
</evidence>
<evidence type="ECO:0000269" key="2">
    <source>
    </source>
</evidence>
<evidence type="ECO:0000305" key="3"/>
<proteinExistence type="evidence at protein level"/>
<protein>
    <recommendedName>
        <fullName>Metallothionein 10-III</fullName>
        <shortName>MT-10-III</shortName>
    </recommendedName>
</protein>
<accession>P80248</accession>
<name>MT13_MYTED</name>
<dbReference type="EMBL" id="AJ005454">
    <property type="protein sequence ID" value="CAA06551.1"/>
    <property type="molecule type" value="mRNA"/>
</dbReference>
<dbReference type="PIR" id="S39418">
    <property type="entry name" value="S39418"/>
</dbReference>
<dbReference type="GO" id="GO:0046872">
    <property type="term" value="F:metal ion binding"/>
    <property type="evidence" value="ECO:0007669"/>
    <property type="project" value="UniProtKB-KW"/>
</dbReference>
<dbReference type="InterPro" id="IPR001008">
    <property type="entry name" value="Metalthion_mollusc"/>
</dbReference>
<dbReference type="PRINTS" id="PR00875">
    <property type="entry name" value="MTMOLLUSC"/>
</dbReference>